<dbReference type="EC" id="2.5.1.141" evidence="1"/>
<dbReference type="EMBL" id="CP001399">
    <property type="protein sequence ID" value="ACP35593.1"/>
    <property type="molecule type" value="Genomic_DNA"/>
</dbReference>
<dbReference type="SMR" id="C3MQD0"/>
<dbReference type="KEGG" id="sis:LS215_1588"/>
<dbReference type="HOGENOM" id="CLU_029631_0_1_2"/>
<dbReference type="OrthoDB" id="131615at2157"/>
<dbReference type="UniPathway" id="UPA00834">
    <property type="reaction ID" value="UER00712"/>
</dbReference>
<dbReference type="Proteomes" id="UP000001747">
    <property type="component" value="Chromosome"/>
</dbReference>
<dbReference type="GO" id="GO:0005886">
    <property type="term" value="C:plasma membrane"/>
    <property type="evidence" value="ECO:0007669"/>
    <property type="project" value="UniProtKB-SubCell"/>
</dbReference>
<dbReference type="GO" id="GO:0008495">
    <property type="term" value="F:protoheme IX farnesyltransferase activity"/>
    <property type="evidence" value="ECO:0007669"/>
    <property type="project" value="UniProtKB-UniRule"/>
</dbReference>
<dbReference type="GO" id="GO:0048034">
    <property type="term" value="P:heme O biosynthetic process"/>
    <property type="evidence" value="ECO:0007669"/>
    <property type="project" value="UniProtKB-UniRule"/>
</dbReference>
<dbReference type="CDD" id="cd13957">
    <property type="entry name" value="PT_UbiA_Cox10"/>
    <property type="match status" value="1"/>
</dbReference>
<dbReference type="FunFam" id="1.10.357.140:FF:000018">
    <property type="entry name" value="Protoheme IX farnesyltransferase"/>
    <property type="match status" value="1"/>
</dbReference>
<dbReference type="Gene3D" id="1.10.357.140">
    <property type="entry name" value="UbiA prenyltransferase"/>
    <property type="match status" value="1"/>
</dbReference>
<dbReference type="HAMAP" id="MF_00154">
    <property type="entry name" value="CyoE_CtaB"/>
    <property type="match status" value="1"/>
</dbReference>
<dbReference type="InterPro" id="IPR006369">
    <property type="entry name" value="Protohaem_IX_farnesylTrfase"/>
</dbReference>
<dbReference type="InterPro" id="IPR000537">
    <property type="entry name" value="UbiA_prenyltransferase"/>
</dbReference>
<dbReference type="InterPro" id="IPR044878">
    <property type="entry name" value="UbiA_sf"/>
</dbReference>
<dbReference type="NCBIfam" id="TIGR01473">
    <property type="entry name" value="cyoE_ctaB"/>
    <property type="match status" value="1"/>
</dbReference>
<dbReference type="PANTHER" id="PTHR43448">
    <property type="entry name" value="PROTOHEME IX FARNESYLTRANSFERASE, MITOCHONDRIAL"/>
    <property type="match status" value="1"/>
</dbReference>
<dbReference type="PANTHER" id="PTHR43448:SF2">
    <property type="entry name" value="PROTOHEME IX FARNESYLTRANSFERASE, MITOCHONDRIAL"/>
    <property type="match status" value="1"/>
</dbReference>
<dbReference type="Pfam" id="PF01040">
    <property type="entry name" value="UbiA"/>
    <property type="match status" value="1"/>
</dbReference>
<name>COXX_SACI2</name>
<comment type="function">
    <text evidence="1">Converts heme B (protoheme IX) to heme O by substitution of the vinyl group on carbon 2 of heme B porphyrin ring with a hydroxyethyl farnesyl side group.</text>
</comment>
<comment type="catalytic activity">
    <reaction evidence="1">
        <text>heme b + (2E,6E)-farnesyl diphosphate + H2O = Fe(II)-heme o + diphosphate</text>
        <dbReference type="Rhea" id="RHEA:28070"/>
        <dbReference type="ChEBI" id="CHEBI:15377"/>
        <dbReference type="ChEBI" id="CHEBI:33019"/>
        <dbReference type="ChEBI" id="CHEBI:60344"/>
        <dbReference type="ChEBI" id="CHEBI:60530"/>
        <dbReference type="ChEBI" id="CHEBI:175763"/>
        <dbReference type="EC" id="2.5.1.141"/>
    </reaction>
</comment>
<comment type="pathway">
    <text evidence="1">Porphyrin-containing compound metabolism; heme O biosynthesis; heme O from protoheme: step 1/1.</text>
</comment>
<comment type="subcellular location">
    <subcellularLocation>
        <location evidence="1">Cell membrane</location>
        <topology evidence="1">Multi-pass membrane protein</topology>
    </subcellularLocation>
</comment>
<comment type="miscellaneous">
    <text evidence="1">Carbon 2 of the heme B porphyrin ring is defined according to the Fischer nomenclature.</text>
</comment>
<comment type="similarity">
    <text evidence="1">Belongs to the UbiA prenyltransferase family. Protoheme IX farnesyltransferase subfamily.</text>
</comment>
<keyword id="KW-1003">Cell membrane</keyword>
<keyword id="KW-0350">Heme biosynthesis</keyword>
<keyword id="KW-0472">Membrane</keyword>
<keyword id="KW-0808">Transferase</keyword>
<keyword id="KW-0812">Transmembrane</keyword>
<keyword id="KW-1133">Transmembrane helix</keyword>
<gene>
    <name evidence="1" type="primary">ctaB</name>
    <name type="ordered locus">LS215_1588</name>
</gene>
<reference key="1">
    <citation type="journal article" date="2009" name="Proc. Natl. Acad. Sci. U.S.A.">
        <title>Biogeography of the Sulfolobus islandicus pan-genome.</title>
        <authorList>
            <person name="Reno M.L."/>
            <person name="Held N.L."/>
            <person name="Fields C.J."/>
            <person name="Burke P.V."/>
            <person name="Whitaker R.J."/>
        </authorList>
    </citation>
    <scope>NUCLEOTIDE SEQUENCE [LARGE SCALE GENOMIC DNA]</scope>
    <source>
        <strain>L.S.2.15 / Lassen #1</strain>
    </source>
</reference>
<accession>C3MQD0</accession>
<organism>
    <name type="scientific">Saccharolobus islandicus (strain L.S.2.15 / Lassen #1)</name>
    <name type="common">Sulfolobus islandicus</name>
    <dbReference type="NCBI Taxonomy" id="429572"/>
    <lineage>
        <taxon>Archaea</taxon>
        <taxon>Thermoproteota</taxon>
        <taxon>Thermoprotei</taxon>
        <taxon>Sulfolobales</taxon>
        <taxon>Sulfolobaceae</taxon>
        <taxon>Saccharolobus</taxon>
    </lineage>
</organism>
<sequence>MSLQQKIKAYLKLGKLGVVSLLDLAAVAGAFLAYKHGISLLPIIPMFIGGTLASMGAMIINSGIEIDRDKVMSRTSKRPTVVGYVNRKEAIIVGSLLAILGTALGFIDNILTAFFIALGVVIYIFVYTILLKPRTWLNIVIGGFAGSAAAWAGYTSLTNSLTLEGFLLGFLIFMWTPGHFWSLALKYREDYVNAHYPMLPAVVGITTSARAIAISNALMIPIVLLLGYYINLIALIAFSILSLFLMFLSYRLILNPTKEEAIKSFIFSNIYLMLILLIMIIVKLI</sequence>
<feature type="chain" id="PRO_1000203461" description="Protoheme IX farnesyltransferase">
    <location>
        <begin position="1"/>
        <end position="285"/>
    </location>
</feature>
<feature type="transmembrane region" description="Helical" evidence="1">
    <location>
        <begin position="13"/>
        <end position="33"/>
    </location>
</feature>
<feature type="transmembrane region" description="Helical" evidence="1">
    <location>
        <begin position="40"/>
        <end position="60"/>
    </location>
</feature>
<feature type="transmembrane region" description="Helical" evidence="1">
    <location>
        <begin position="89"/>
        <end position="109"/>
    </location>
</feature>
<feature type="transmembrane region" description="Helical" evidence="1">
    <location>
        <begin position="110"/>
        <end position="130"/>
    </location>
</feature>
<feature type="transmembrane region" description="Helical" evidence="1">
    <location>
        <begin position="137"/>
        <end position="157"/>
    </location>
</feature>
<feature type="transmembrane region" description="Helical" evidence="1">
    <location>
        <begin position="165"/>
        <end position="185"/>
    </location>
</feature>
<feature type="transmembrane region" description="Helical" evidence="1">
    <location>
        <begin position="194"/>
        <end position="214"/>
    </location>
</feature>
<feature type="transmembrane region" description="Helical" evidence="1">
    <location>
        <begin position="230"/>
        <end position="252"/>
    </location>
</feature>
<feature type="transmembrane region" description="Helical" evidence="1">
    <location>
        <begin position="265"/>
        <end position="285"/>
    </location>
</feature>
<evidence type="ECO:0000255" key="1">
    <source>
        <dbReference type="HAMAP-Rule" id="MF_00154"/>
    </source>
</evidence>
<proteinExistence type="inferred from homology"/>
<protein>
    <recommendedName>
        <fullName evidence="1">Protoheme IX farnesyltransferase</fullName>
        <ecNumber evidence="1">2.5.1.141</ecNumber>
    </recommendedName>
    <alternativeName>
        <fullName evidence="1">Heme B farnesyltransferase</fullName>
    </alternativeName>
    <alternativeName>
        <fullName evidence="1">Heme O synthase</fullName>
    </alternativeName>
</protein>